<proteinExistence type="evidence at protein level"/>
<protein>
    <recommendedName>
        <fullName evidence="10">Copper chaperone ATX1</fullName>
    </recommendedName>
    <alternativeName>
        <fullName evidence="9">Antioxidant protein 1</fullName>
    </alternativeName>
    <alternativeName>
        <fullName evidence="9">Metal homeostasis protein ATX1</fullName>
    </alternativeName>
</protein>
<organism>
    <name type="scientific">Saccharomyces cerevisiae (strain ATCC 204508 / S288c)</name>
    <name type="common">Baker's yeast</name>
    <dbReference type="NCBI Taxonomy" id="559292"/>
    <lineage>
        <taxon>Eukaryota</taxon>
        <taxon>Fungi</taxon>
        <taxon>Dikarya</taxon>
        <taxon>Ascomycota</taxon>
        <taxon>Saccharomycotina</taxon>
        <taxon>Saccharomycetes</taxon>
        <taxon>Saccharomycetales</taxon>
        <taxon>Saccharomycetaceae</taxon>
        <taxon>Saccharomyces</taxon>
    </lineage>
</organism>
<feature type="chain" id="PRO_0000212535" description="Copper chaperone ATX1">
    <location>
        <begin position="1"/>
        <end position="73"/>
    </location>
</feature>
<feature type="domain" description="HMA" evidence="1">
    <location>
        <begin position="4"/>
        <end position="68"/>
    </location>
</feature>
<feature type="binding site" evidence="1 2 4 5 14 17 18 19">
    <location>
        <position position="15"/>
    </location>
    <ligand>
        <name>Cu(+)</name>
        <dbReference type="ChEBI" id="CHEBI:49552"/>
    </ligand>
</feature>
<feature type="binding site" evidence="1 2 4 5 14 17 18 19">
    <location>
        <position position="18"/>
    </location>
    <ligand>
        <name>Cu(+)</name>
        <dbReference type="ChEBI" id="CHEBI:49552"/>
    </ligand>
</feature>
<feature type="sequence conflict" description="In Ref. 5; AAS56693." evidence="11" ref="5">
    <original>Q</original>
    <variation>H</variation>
    <location>
        <position position="8"/>
    </location>
</feature>
<feature type="strand" evidence="20">
    <location>
        <begin position="5"/>
        <end position="11"/>
    </location>
</feature>
<feature type="helix" evidence="20">
    <location>
        <begin position="16"/>
        <end position="27"/>
    </location>
</feature>
<feature type="turn" evidence="20">
    <location>
        <begin position="28"/>
        <end position="31"/>
    </location>
</feature>
<feature type="strand" evidence="20">
    <location>
        <begin position="32"/>
        <end position="39"/>
    </location>
</feature>
<feature type="turn" evidence="20">
    <location>
        <begin position="40"/>
        <end position="43"/>
    </location>
</feature>
<feature type="strand" evidence="20">
    <location>
        <begin position="44"/>
        <end position="51"/>
    </location>
</feature>
<feature type="helix" evidence="20">
    <location>
        <begin position="53"/>
        <end position="61"/>
    </location>
</feature>
<feature type="turn" evidence="21">
    <location>
        <begin position="62"/>
        <end position="64"/>
    </location>
</feature>
<feature type="strand" evidence="20">
    <location>
        <begin position="67"/>
        <end position="73"/>
    </location>
</feature>
<sequence>MAEIKHYQFNVVMTCSGCSGAVNKVLTKLEPDVSKIDISLEKQLVDVYTTLPYDFILEKIKKTGKEVRSGKQL</sequence>
<evidence type="ECO:0000255" key="1">
    <source>
        <dbReference type="PROSITE-ProRule" id="PRU00280"/>
    </source>
</evidence>
<evidence type="ECO:0000269" key="2">
    <source>
    </source>
</evidence>
<evidence type="ECO:0000269" key="3">
    <source>
    </source>
</evidence>
<evidence type="ECO:0000269" key="4">
    <source>
    </source>
</evidence>
<evidence type="ECO:0000269" key="5">
    <source>
    </source>
</evidence>
<evidence type="ECO:0000269" key="6">
    <source>
    </source>
</evidence>
<evidence type="ECO:0000269" key="7">
    <source>
    </source>
</evidence>
<evidence type="ECO:0000269" key="8">
    <source>
    </source>
</evidence>
<evidence type="ECO:0000303" key="9">
    <source>
    </source>
</evidence>
<evidence type="ECO:0000303" key="10">
    <source>
    </source>
</evidence>
<evidence type="ECO:0000305" key="11"/>
<evidence type="ECO:0007744" key="12">
    <source>
        <dbReference type="PDB" id="1CC7"/>
    </source>
</evidence>
<evidence type="ECO:0007744" key="13">
    <source>
        <dbReference type="PDB" id="1CC8"/>
    </source>
</evidence>
<evidence type="ECO:0007744" key="14">
    <source>
        <dbReference type="PDB" id="1FD8"/>
    </source>
</evidence>
<evidence type="ECO:0007744" key="15">
    <source>
        <dbReference type="PDB" id="1FES"/>
    </source>
</evidence>
<evidence type="ECO:0007744" key="16">
    <source>
        <dbReference type="PDB" id="2GGP"/>
    </source>
</evidence>
<evidence type="ECO:0007744" key="17">
    <source>
        <dbReference type="PDB" id="3K7R"/>
    </source>
</evidence>
<evidence type="ECO:0007744" key="18">
    <source>
        <dbReference type="PDB" id="5VDE"/>
    </source>
</evidence>
<evidence type="ECO:0007744" key="19">
    <source>
        <dbReference type="PDB" id="5VDF"/>
    </source>
</evidence>
<evidence type="ECO:0007829" key="20">
    <source>
        <dbReference type="PDB" id="1CC8"/>
    </source>
</evidence>
<evidence type="ECO:0007829" key="21">
    <source>
        <dbReference type="PDB" id="5VDE"/>
    </source>
</evidence>
<accession>P38636</accession>
<accession>D6W0T4</accession>
<accession>E9P8W0</accession>
<name>ATX1_YEAST</name>
<comment type="function">
    <text evidence="2 3 6 7 8">Copper homeostasis factor that specifically transports copper to the secretory pathway for incorporation into copper enzymes destined for the cell surface or extracellular milieu (PubMed:9346482). Shuttles copper to the transport ATPase CCC2 on a post-Golgi vesicle for eventual targeting to the cell-surface high-affinity iron uptake protein FET3 (PubMed:11327811, PubMed:16732294, PubMed:9083054, PubMed:9346482). Protects against oxygen toxicity (PubMed:7731983).</text>
</comment>
<comment type="activity regulation">
    <text evidence="4">Tetrathiomolybdate directly and reversibly down-regulates copper delivery to secreted metalloenzymes.</text>
</comment>
<comment type="subunit">
    <text evidence="3 5">Homodimer (PubMed:28865724). Interacts with CCC2 via the copper anion (PubMed:16732294).</text>
</comment>
<comment type="subcellular location">
    <subcellularLocation>
        <location evidence="8">Cytoplasm</location>
    </subcellularLocation>
</comment>
<comment type="induction">
    <text evidence="6 7">Expression is induced by oxygen (PubMed:7731983). Expression is also induced by the iron-sensing trans-activator AFT1 (PubMed:9083054).</text>
</comment>
<comment type="similarity">
    <text evidence="11">Belongs to the ATX1 family.</text>
</comment>
<reference key="1">
    <citation type="journal article" date="1995" name="Proc. Natl. Acad. Sci. U.S.A.">
        <title>The ATX1 gene of Saccharomyces cerevisiae encodes a small metal homeostasis factor that protects cells against reactive oxygen toxicity.</title>
        <authorList>
            <person name="Lin S.-J."/>
            <person name="Culotta V.L."/>
        </authorList>
    </citation>
    <scope>NUCLEOTIDE SEQUENCE [GENOMIC DNA]</scope>
    <scope>FUNCTION</scope>
    <scope>INDUCTION</scope>
</reference>
<reference key="2">
    <citation type="journal article" date="1997" name="Yeast">
        <title>Sequence analysis of the 33 kb long region between ORC5 and SUI1 from the left arm of chromosome XIV from Saccharomyces cerevisiae.</title>
        <authorList>
            <person name="Sen-Gupta M."/>
            <person name="Gueldener U."/>
            <person name="Beinhauer J.D."/>
            <person name="Fiedler T.A."/>
            <person name="Hegemann J.H."/>
        </authorList>
    </citation>
    <scope>NUCLEOTIDE SEQUENCE [GENOMIC DNA]</scope>
    <source>
        <strain>ATCC 96604 / S288c / FY1679</strain>
    </source>
</reference>
<reference key="3">
    <citation type="journal article" date="1997" name="Nature">
        <title>The nucleotide sequence of Saccharomyces cerevisiae chromosome XIV and its evolutionary implications.</title>
        <authorList>
            <person name="Philippsen P."/>
            <person name="Kleine K."/>
            <person name="Poehlmann R."/>
            <person name="Duesterhoeft A."/>
            <person name="Hamberg K."/>
            <person name="Hegemann J.H."/>
            <person name="Obermaier B."/>
            <person name="Urrestarazu L.A."/>
            <person name="Aert R."/>
            <person name="Albermann K."/>
            <person name="Altmann R."/>
            <person name="Andre B."/>
            <person name="Baladron V."/>
            <person name="Ballesta J.P.G."/>
            <person name="Becam A.-M."/>
            <person name="Beinhauer J.D."/>
            <person name="Boskovic J."/>
            <person name="Buitrago M.J."/>
            <person name="Bussereau F."/>
            <person name="Coster F."/>
            <person name="Crouzet M."/>
            <person name="D'Angelo M."/>
            <person name="Dal Pero F."/>
            <person name="De Antoni A."/>
            <person name="del Rey F."/>
            <person name="Doignon F."/>
            <person name="Domdey H."/>
            <person name="Dubois E."/>
            <person name="Fiedler T.A."/>
            <person name="Fleig U."/>
            <person name="Floeth M."/>
            <person name="Fritz C."/>
            <person name="Gaillardin C."/>
            <person name="Garcia-Cantalejo J.M."/>
            <person name="Glansdorff N."/>
            <person name="Goffeau A."/>
            <person name="Gueldener U."/>
            <person name="Herbert C.J."/>
            <person name="Heumann K."/>
            <person name="Heuss-Neitzel D."/>
            <person name="Hilbert H."/>
            <person name="Hinni K."/>
            <person name="Iraqui Houssaini I."/>
            <person name="Jacquet M."/>
            <person name="Jimenez A."/>
            <person name="Jonniaux J.-L."/>
            <person name="Karpfinger-Hartl L."/>
            <person name="Lanfranchi G."/>
            <person name="Lepingle A."/>
            <person name="Levesque H."/>
            <person name="Lyck R."/>
            <person name="Maftahi M."/>
            <person name="Mallet L."/>
            <person name="Maurer C.T.C."/>
            <person name="Messenguy F."/>
            <person name="Mewes H.-W."/>
            <person name="Moestl D."/>
            <person name="Nasr F."/>
            <person name="Nicaud J.-M."/>
            <person name="Niedenthal R.K."/>
            <person name="Pandolfo D."/>
            <person name="Pierard A."/>
            <person name="Piravandi E."/>
            <person name="Planta R.J."/>
            <person name="Pohl T.M."/>
            <person name="Purnelle B."/>
            <person name="Rebischung C."/>
            <person name="Remacha M.A."/>
            <person name="Revuelta J.L."/>
            <person name="Rinke M."/>
            <person name="Saiz J.E."/>
            <person name="Sartorello F."/>
            <person name="Scherens B."/>
            <person name="Sen-Gupta M."/>
            <person name="Soler-Mira A."/>
            <person name="Urbanus J.H.M."/>
            <person name="Valle G."/>
            <person name="Van Dyck L."/>
            <person name="Verhasselt P."/>
            <person name="Vierendeels F."/>
            <person name="Vissers S."/>
            <person name="Voet M."/>
            <person name="Volckaert G."/>
            <person name="Wach A."/>
            <person name="Wambutt R."/>
            <person name="Wedler H."/>
            <person name="Zollner A."/>
            <person name="Hani J."/>
        </authorList>
    </citation>
    <scope>NUCLEOTIDE SEQUENCE [LARGE SCALE GENOMIC DNA]</scope>
    <source>
        <strain>ATCC 204508 / S288c</strain>
    </source>
</reference>
<reference key="4">
    <citation type="journal article" date="2014" name="G3 (Bethesda)">
        <title>The reference genome sequence of Saccharomyces cerevisiae: Then and now.</title>
        <authorList>
            <person name="Engel S.R."/>
            <person name="Dietrich F.S."/>
            <person name="Fisk D.G."/>
            <person name="Binkley G."/>
            <person name="Balakrishnan R."/>
            <person name="Costanzo M.C."/>
            <person name="Dwight S.S."/>
            <person name="Hitz B.C."/>
            <person name="Karra K."/>
            <person name="Nash R.S."/>
            <person name="Weng S."/>
            <person name="Wong E.D."/>
            <person name="Lloyd P."/>
            <person name="Skrzypek M.S."/>
            <person name="Miyasato S.R."/>
            <person name="Simison M."/>
            <person name="Cherry J.M."/>
        </authorList>
    </citation>
    <scope>GENOME REANNOTATION</scope>
    <source>
        <strain>ATCC 204508 / S288c</strain>
    </source>
</reference>
<reference key="5">
    <citation type="journal article" date="2007" name="Genome Res.">
        <title>Approaching a complete repository of sequence-verified protein-encoding clones for Saccharomyces cerevisiae.</title>
        <authorList>
            <person name="Hu Y."/>
            <person name="Rolfs A."/>
            <person name="Bhullar B."/>
            <person name="Murthy T.V.S."/>
            <person name="Zhu C."/>
            <person name="Berger M.F."/>
            <person name="Camargo A.A."/>
            <person name="Kelley F."/>
            <person name="McCarron S."/>
            <person name="Jepson D."/>
            <person name="Richardson A."/>
            <person name="Raphael J."/>
            <person name="Moreira D."/>
            <person name="Taycher E."/>
            <person name="Zuo D."/>
            <person name="Mohr S."/>
            <person name="Kane M.F."/>
            <person name="Williamson J."/>
            <person name="Simpson A.J.G."/>
            <person name="Bulyk M.L."/>
            <person name="Harlow E."/>
            <person name="Marsischky G."/>
            <person name="Kolodner R.D."/>
            <person name="LaBaer J."/>
        </authorList>
    </citation>
    <scope>NUCLEOTIDE SEQUENCE [GENOMIC DNA]</scope>
    <source>
        <strain>ATCC 204508 / S288c</strain>
    </source>
</reference>
<reference key="6">
    <citation type="journal article" date="1997" name="J. Biol. Chem.">
        <title>A role for the Saccharomyces cerevisiae ATX1 gene in copper trafficking and iron transport.</title>
        <authorList>
            <person name="Lin S.J."/>
            <person name="Pufahl R.A."/>
            <person name="Dancis A."/>
            <person name="O'Halloran T.V."/>
            <person name="Culotta V.C."/>
        </authorList>
    </citation>
    <scope>FUNCTION</scope>
</reference>
<reference key="7">
    <citation type="journal article" date="1997" name="Science">
        <title>Metal ion chaperone function of the soluble Cu(I) receptor Atx1.</title>
        <authorList>
            <person name="Pufahl R.A."/>
            <person name="Singer C.P."/>
            <person name="Peariso K.L."/>
            <person name="Lin S.J."/>
            <person name="Schmidt P.J."/>
            <person name="Fahrni C.J."/>
            <person name="Culotta V.C."/>
            <person name="Penner-Hahn J.E."/>
            <person name="O'Halloran T.V."/>
        </authorList>
    </citation>
    <scope>FUNCTION</scope>
    <scope>COPPER-BINDING</scope>
    <scope>SUBCELLULAR LOCATION</scope>
</reference>
<reference evidence="12 13" key="8">
    <citation type="journal article" date="1999" name="Structure">
        <title>Crystal structure of the Atx1 metallochaperone protein at 1.02 A resolution.</title>
        <authorList>
            <person name="Rosenzweig A.C."/>
            <person name="Huffman D.L."/>
            <person name="Hou M.Y."/>
            <person name="Wernimont A.K."/>
            <person name="Pufahl R.A."/>
            <person name="O'Halloran T.V."/>
        </authorList>
    </citation>
    <scope>X-RAY CRYSTALLOGRAPHY (1.02 ANGSTROMS)</scope>
</reference>
<reference evidence="14 15" key="9">
    <citation type="journal article" date="2001" name="Biochemistry">
        <title>Solution structure of the Cu(I) and apo forms of the yeast metallochaperone, Atx1.</title>
        <authorList>
            <person name="Arnesano F."/>
            <person name="Banci L."/>
            <person name="Bertini I."/>
            <person name="Huffman D.L."/>
            <person name="O'Halloran T.V."/>
        </authorList>
    </citation>
    <scope>STRUCTURE BY NMR IN COMPLEX WITH COPPER</scope>
</reference>
<reference evidence="16" key="10">
    <citation type="journal article" date="2006" name="Nat. Chem. Biol.">
        <title>The Atx1-Ccc2 complex is a metal-mediated protein-protein interaction.</title>
        <authorList>
            <person name="Banci L."/>
            <person name="Bertini I."/>
            <person name="Cantini F."/>
            <person name="Felli I.C."/>
            <person name="Gonnelli L."/>
            <person name="Hadjiliadis N."/>
            <person name="Pierattelli R."/>
            <person name="Rosato A."/>
            <person name="Voulgaris P."/>
        </authorList>
    </citation>
    <scope>STRUCTURE BY NMR</scope>
    <scope>FUNCTION</scope>
    <scope>INTERACTION WITH CCC2</scope>
</reference>
<reference evidence="17" key="11">
    <citation type="journal article" date="2010" name="Science">
        <title>Tetrathiomolybdate inhibits copper trafficking proteins through metal cluster formation.</title>
        <authorList>
            <person name="Alvarez H.M."/>
            <person name="Xue Y."/>
            <person name="Robinson C.D."/>
            <person name="Canalizo-Hernandez M.A."/>
            <person name="Marvin R.G."/>
            <person name="Kelly R.A."/>
            <person name="Mondragon A."/>
            <person name="Penner-Hahn J.E."/>
            <person name="O'Halloran T.V."/>
        </authorList>
    </citation>
    <scope>X-RAY CRYSTALLOGRAPHY (2.28 ANGSTROMS) IN COMPLEX WITH COPPER AND TETRATHIOMOLYBDATE</scope>
</reference>
<reference evidence="18 19" key="12">
    <citation type="journal article" date="2017" name="J. Inorg. Biochem.">
        <title>The crystal structures of a copper-bound metallochaperone from Saccharomyces cerevisiae.</title>
        <authorList>
            <person name="Lee M."/>
            <person name="Cooray N.D.G."/>
            <person name="Maher M.J."/>
        </authorList>
    </citation>
    <scope>X-RAY CRYSTALLOGRAPHY (1.65 ANGSTROMS)IN COMPLEX WITH COPPER</scope>
    <scope>SUBUNIT</scope>
</reference>
<dbReference type="EMBL" id="L35270">
    <property type="protein sequence ID" value="AAC37428.1"/>
    <property type="molecule type" value="Genomic_DNA"/>
</dbReference>
<dbReference type="EMBL" id="X96722">
    <property type="protein sequence ID" value="CAA65485.1"/>
    <property type="molecule type" value="Genomic_DNA"/>
</dbReference>
<dbReference type="EMBL" id="Z71535">
    <property type="protein sequence ID" value="CAA96166.1"/>
    <property type="molecule type" value="Genomic_DNA"/>
</dbReference>
<dbReference type="EMBL" id="AY558367">
    <property type="protein sequence ID" value="AAS56693.1"/>
    <property type="molecule type" value="Genomic_DNA"/>
</dbReference>
<dbReference type="EMBL" id="BK006947">
    <property type="protein sequence ID" value="DAA10300.1"/>
    <property type="molecule type" value="Genomic_DNA"/>
</dbReference>
<dbReference type="PIR" id="S47930">
    <property type="entry name" value="S47930"/>
</dbReference>
<dbReference type="RefSeq" id="NP_014140.1">
    <property type="nucleotide sequence ID" value="NM_001183097.1"/>
</dbReference>
<dbReference type="PDB" id="1CC7">
    <property type="method" value="X-ray"/>
    <property type="resolution" value="1.20 A"/>
    <property type="chains" value="A=1-73"/>
</dbReference>
<dbReference type="PDB" id="1CC8">
    <property type="method" value="X-ray"/>
    <property type="resolution" value="1.02 A"/>
    <property type="chains" value="A=1-73"/>
</dbReference>
<dbReference type="PDB" id="1FD8">
    <property type="method" value="NMR"/>
    <property type="chains" value="A=1-73"/>
</dbReference>
<dbReference type="PDB" id="1FES">
    <property type="method" value="NMR"/>
    <property type="chains" value="A=1-73"/>
</dbReference>
<dbReference type="PDB" id="2GGP">
    <property type="method" value="NMR"/>
    <property type="chains" value="A=1-73"/>
</dbReference>
<dbReference type="PDB" id="3K7R">
    <property type="method" value="X-ray"/>
    <property type="resolution" value="2.28 A"/>
    <property type="chains" value="A/B/C/D/E/F/G/H/I/J/K/L=1-73"/>
</dbReference>
<dbReference type="PDB" id="5VDE">
    <property type="method" value="X-ray"/>
    <property type="resolution" value="1.65 A"/>
    <property type="chains" value="A/B/C/D=1-73"/>
</dbReference>
<dbReference type="PDB" id="5VDF">
    <property type="method" value="X-ray"/>
    <property type="resolution" value="1.93 A"/>
    <property type="chains" value="A/B/C/D/E/F/G/H=1-73"/>
</dbReference>
<dbReference type="PDBsum" id="1CC7"/>
<dbReference type="PDBsum" id="1CC8"/>
<dbReference type="PDBsum" id="1FD8"/>
<dbReference type="PDBsum" id="1FES"/>
<dbReference type="PDBsum" id="2GGP"/>
<dbReference type="PDBsum" id="3K7R"/>
<dbReference type="PDBsum" id="5VDE"/>
<dbReference type="PDBsum" id="5VDF"/>
<dbReference type="SMR" id="P38636"/>
<dbReference type="BioGRID" id="35580">
    <property type="interactions" value="80"/>
</dbReference>
<dbReference type="DIP" id="DIP-813N"/>
<dbReference type="FunCoup" id="P38636">
    <property type="interactions" value="766"/>
</dbReference>
<dbReference type="IntAct" id="P38636">
    <property type="interactions" value="5"/>
</dbReference>
<dbReference type="MINT" id="P38636"/>
<dbReference type="STRING" id="4932.YNL259C"/>
<dbReference type="iPTMnet" id="P38636"/>
<dbReference type="PaxDb" id="4932-YNL259C"/>
<dbReference type="PeptideAtlas" id="P38636"/>
<dbReference type="EnsemblFungi" id="YNL259C_mRNA">
    <property type="protein sequence ID" value="YNL259C"/>
    <property type="gene ID" value="YNL259C"/>
</dbReference>
<dbReference type="GeneID" id="855462"/>
<dbReference type="KEGG" id="sce:YNL259C"/>
<dbReference type="AGR" id="SGD:S000005203"/>
<dbReference type="SGD" id="S000005203">
    <property type="gene designation" value="ATX1"/>
</dbReference>
<dbReference type="VEuPathDB" id="FungiDB:YNL259C"/>
<dbReference type="eggNOG" id="KOG1603">
    <property type="taxonomic scope" value="Eukaryota"/>
</dbReference>
<dbReference type="HOGENOM" id="CLU_134973_3_1_1"/>
<dbReference type="InParanoid" id="P38636"/>
<dbReference type="OMA" id="YEFDIAM"/>
<dbReference type="OrthoDB" id="689350at2759"/>
<dbReference type="BioCyc" id="YEAST:G3O-33255-MONOMER"/>
<dbReference type="BioGRID-ORCS" id="855462">
    <property type="hits" value="0 hits in 10 CRISPR screens"/>
</dbReference>
<dbReference type="ChiTaRS" id="ATX1">
    <property type="organism name" value="yeast"/>
</dbReference>
<dbReference type="EvolutionaryTrace" id="P38636"/>
<dbReference type="PRO" id="PR:P38636"/>
<dbReference type="Proteomes" id="UP000002311">
    <property type="component" value="Chromosome XIV"/>
</dbReference>
<dbReference type="RNAct" id="P38636">
    <property type="molecule type" value="protein"/>
</dbReference>
<dbReference type="GO" id="GO:0005829">
    <property type="term" value="C:cytosol"/>
    <property type="evidence" value="ECO:0000314"/>
    <property type="project" value="SGD"/>
</dbReference>
<dbReference type="GO" id="GO:0016531">
    <property type="term" value="F:copper chaperone activity"/>
    <property type="evidence" value="ECO:0000314"/>
    <property type="project" value="SGD"/>
</dbReference>
<dbReference type="GO" id="GO:0046872">
    <property type="term" value="F:metal ion binding"/>
    <property type="evidence" value="ECO:0007669"/>
    <property type="project" value="UniProtKB-KW"/>
</dbReference>
<dbReference type="GO" id="GO:0034599">
    <property type="term" value="P:cellular response to oxidative stress"/>
    <property type="evidence" value="ECO:0000315"/>
    <property type="project" value="SGD"/>
</dbReference>
<dbReference type="GO" id="GO:0006825">
    <property type="term" value="P:copper ion transport"/>
    <property type="evidence" value="ECO:0000315"/>
    <property type="project" value="SGD"/>
</dbReference>
<dbReference type="GO" id="GO:0006879">
    <property type="term" value="P:intracellular iron ion homeostasis"/>
    <property type="evidence" value="ECO:0000315"/>
    <property type="project" value="SGD"/>
</dbReference>
<dbReference type="CDD" id="cd00371">
    <property type="entry name" value="HMA"/>
    <property type="match status" value="1"/>
</dbReference>
<dbReference type="FunFam" id="3.30.70.100:FF:000008">
    <property type="entry name" value="Copper transport protein ATOX1"/>
    <property type="match status" value="1"/>
</dbReference>
<dbReference type="Gene3D" id="3.30.70.100">
    <property type="match status" value="1"/>
</dbReference>
<dbReference type="InterPro" id="IPR051881">
    <property type="entry name" value="Copper_transport_ATOX1-like"/>
</dbReference>
<dbReference type="InterPro" id="IPR017969">
    <property type="entry name" value="Heavy-metal-associated_CS"/>
</dbReference>
<dbReference type="InterPro" id="IPR006121">
    <property type="entry name" value="HMA_dom"/>
</dbReference>
<dbReference type="InterPro" id="IPR036163">
    <property type="entry name" value="HMA_dom_sf"/>
</dbReference>
<dbReference type="PANTHER" id="PTHR46365">
    <property type="entry name" value="COPPER TRANSPORT PROTEIN ATOX1"/>
    <property type="match status" value="1"/>
</dbReference>
<dbReference type="PANTHER" id="PTHR46365:SF1">
    <property type="entry name" value="COPPER TRANSPORT PROTEIN ATOX1"/>
    <property type="match status" value="1"/>
</dbReference>
<dbReference type="Pfam" id="PF00403">
    <property type="entry name" value="HMA"/>
    <property type="match status" value="1"/>
</dbReference>
<dbReference type="SUPFAM" id="SSF55008">
    <property type="entry name" value="HMA, heavy metal-associated domain"/>
    <property type="match status" value="1"/>
</dbReference>
<dbReference type="PROSITE" id="PS01047">
    <property type="entry name" value="HMA_1"/>
    <property type="match status" value="1"/>
</dbReference>
<dbReference type="PROSITE" id="PS50846">
    <property type="entry name" value="HMA_2"/>
    <property type="match status" value="1"/>
</dbReference>
<gene>
    <name evidence="9" type="primary">ATX1</name>
    <name type="ordered locus">YNL259C</name>
    <name type="ORF">N0840</name>
</gene>
<keyword id="KW-0002">3D-structure</keyword>
<keyword id="KW-0143">Chaperone</keyword>
<keyword id="KW-0186">Copper</keyword>
<keyword id="KW-0187">Copper transport</keyword>
<keyword id="KW-0963">Cytoplasm</keyword>
<keyword id="KW-0406">Ion transport</keyword>
<keyword id="KW-0479">Metal-binding</keyword>
<keyword id="KW-1185">Reference proteome</keyword>
<keyword id="KW-0813">Transport</keyword>